<accession>P0CAI5</accession>
<reference key="1">
    <citation type="submission" date="2003-03" db="EMBL/GenBank/DDBJ databases">
        <title>African swine fever virus genomes.</title>
        <authorList>
            <person name="Kutish G.F."/>
            <person name="Rock D.L."/>
        </authorList>
    </citation>
    <scope>NUCLEOTIDE SEQUENCE [LARGE SCALE GENOMIC DNA]</scope>
</reference>
<organism>
    <name type="scientific">African swine fever virus (isolate Tick/South Africa/Pretoriuskop Pr4/1996)</name>
    <name type="common">ASFV</name>
    <dbReference type="NCBI Taxonomy" id="561443"/>
    <lineage>
        <taxon>Viruses</taxon>
        <taxon>Varidnaviria</taxon>
        <taxon>Bamfordvirae</taxon>
        <taxon>Nucleocytoviricota</taxon>
        <taxon>Pokkesviricetes</taxon>
        <taxon>Asfuvirales</taxon>
        <taxon>Asfarviridae</taxon>
        <taxon>Asfivirus</taxon>
        <taxon>African swine fever virus</taxon>
    </lineage>
</organism>
<dbReference type="EMBL" id="AY261363">
    <property type="status" value="NOT_ANNOTATED_CDS"/>
    <property type="molecule type" value="Genomic_DNA"/>
</dbReference>
<dbReference type="Proteomes" id="UP000000859">
    <property type="component" value="Segment"/>
</dbReference>
<organismHost>
    <name type="scientific">Ornithodoros</name>
    <name type="common">relapsing fever ticks</name>
    <dbReference type="NCBI Taxonomy" id="6937"/>
</organismHost>
<organismHost>
    <name type="scientific">Phacochoerus aethiopicus</name>
    <name type="common">Warthog</name>
    <dbReference type="NCBI Taxonomy" id="85517"/>
</organismHost>
<organismHost>
    <name type="scientific">Phacochoerus africanus</name>
    <name type="common">Warthog</name>
    <dbReference type="NCBI Taxonomy" id="41426"/>
</organismHost>
<organismHost>
    <name type="scientific">Potamochoerus larvatus</name>
    <name type="common">Bushpig</name>
    <dbReference type="NCBI Taxonomy" id="273792"/>
</organismHost>
<organismHost>
    <name type="scientific">Sus scrofa</name>
    <name type="common">Pig</name>
    <dbReference type="NCBI Taxonomy" id="9823"/>
</organismHost>
<proteinExistence type="inferred from homology"/>
<name>VF62_ASFP4</name>
<feature type="chain" id="PRO_0000373708" description="Uncharacterized protein C62L">
    <location>
        <begin position="1"/>
        <end position="62"/>
    </location>
</feature>
<comment type="similarity">
    <text evidence="1">Belongs to the asfivirus C62L family.</text>
</comment>
<evidence type="ECO:0000305" key="1"/>
<sequence length="62" mass="7171">MNRGSISSGTPGLFVGSMRNTPFVVKINVIFLKVISNTAVSVFWRDRRIRFESDWLNSYFQK</sequence>
<protein>
    <recommendedName>
        <fullName>Uncharacterized protein C62L</fullName>
        <shortName>pC62L</shortName>
    </recommendedName>
</protein>
<gene>
    <name type="ordered locus">Pret-082</name>
</gene>